<dbReference type="EMBL" id="U85643">
    <property type="protein sequence ID" value="AAC45133.1"/>
    <property type="molecule type" value="Genomic_DNA"/>
</dbReference>
<dbReference type="EMBL" id="CP000075">
    <property type="protein sequence ID" value="AAY39212.1"/>
    <property type="molecule type" value="Genomic_DNA"/>
</dbReference>
<dbReference type="RefSeq" id="YP_237250.1">
    <property type="nucleotide sequence ID" value="NC_007005.1"/>
</dbReference>
<dbReference type="SMR" id="P95578"/>
<dbReference type="STRING" id="205918.Psyr_4182"/>
<dbReference type="KEGG" id="psb:Psyr_4182"/>
<dbReference type="PATRIC" id="fig|205918.7.peg.4309"/>
<dbReference type="eggNOG" id="COG0779">
    <property type="taxonomic scope" value="Bacteria"/>
</dbReference>
<dbReference type="HOGENOM" id="CLU_070525_1_1_6"/>
<dbReference type="OrthoDB" id="9805006at2"/>
<dbReference type="Proteomes" id="UP000000426">
    <property type="component" value="Chromosome"/>
</dbReference>
<dbReference type="GO" id="GO:0005829">
    <property type="term" value="C:cytosol"/>
    <property type="evidence" value="ECO:0007669"/>
    <property type="project" value="TreeGrafter"/>
</dbReference>
<dbReference type="GO" id="GO:0000028">
    <property type="term" value="P:ribosomal small subunit assembly"/>
    <property type="evidence" value="ECO:0007669"/>
    <property type="project" value="TreeGrafter"/>
</dbReference>
<dbReference type="GO" id="GO:0006412">
    <property type="term" value="P:translation"/>
    <property type="evidence" value="ECO:0007669"/>
    <property type="project" value="TreeGrafter"/>
</dbReference>
<dbReference type="CDD" id="cd01734">
    <property type="entry name" value="YlxS_C"/>
    <property type="match status" value="1"/>
</dbReference>
<dbReference type="FunFam" id="3.30.300.70:FF:000001">
    <property type="entry name" value="Ribosome maturation factor RimP"/>
    <property type="match status" value="1"/>
</dbReference>
<dbReference type="Gene3D" id="2.30.30.180">
    <property type="entry name" value="Ribosome maturation factor RimP, C-terminal domain"/>
    <property type="match status" value="1"/>
</dbReference>
<dbReference type="Gene3D" id="3.30.300.70">
    <property type="entry name" value="RimP-like superfamily, N-terminal"/>
    <property type="match status" value="1"/>
</dbReference>
<dbReference type="HAMAP" id="MF_01077">
    <property type="entry name" value="RimP"/>
    <property type="match status" value="1"/>
</dbReference>
<dbReference type="InterPro" id="IPR003728">
    <property type="entry name" value="Ribosome_maturation_RimP"/>
</dbReference>
<dbReference type="InterPro" id="IPR028998">
    <property type="entry name" value="RimP_C"/>
</dbReference>
<dbReference type="InterPro" id="IPR036847">
    <property type="entry name" value="RimP_C_sf"/>
</dbReference>
<dbReference type="InterPro" id="IPR028989">
    <property type="entry name" value="RimP_N"/>
</dbReference>
<dbReference type="InterPro" id="IPR035956">
    <property type="entry name" value="RimP_N_sf"/>
</dbReference>
<dbReference type="NCBIfam" id="NF000927">
    <property type="entry name" value="PRK00092.1-1"/>
    <property type="match status" value="1"/>
</dbReference>
<dbReference type="PANTHER" id="PTHR33867">
    <property type="entry name" value="RIBOSOME MATURATION FACTOR RIMP"/>
    <property type="match status" value="1"/>
</dbReference>
<dbReference type="PANTHER" id="PTHR33867:SF1">
    <property type="entry name" value="RIBOSOME MATURATION FACTOR RIMP"/>
    <property type="match status" value="1"/>
</dbReference>
<dbReference type="Pfam" id="PF17384">
    <property type="entry name" value="DUF150_C"/>
    <property type="match status" value="1"/>
</dbReference>
<dbReference type="Pfam" id="PF02576">
    <property type="entry name" value="RimP_N"/>
    <property type="match status" value="1"/>
</dbReference>
<dbReference type="SUPFAM" id="SSF74942">
    <property type="entry name" value="YhbC-like, C-terminal domain"/>
    <property type="match status" value="1"/>
</dbReference>
<dbReference type="SUPFAM" id="SSF75420">
    <property type="entry name" value="YhbC-like, N-terminal domain"/>
    <property type="match status" value="1"/>
</dbReference>
<gene>
    <name evidence="1" type="primary">rimP</name>
    <name type="ordered locus">Psyr_4182</name>
</gene>
<accession>P95578</accession>
<accession>Q4ZNR0</accession>
<feature type="chain" id="PRO_0000181908" description="Ribosome maturation factor RimP">
    <location>
        <begin position="1"/>
        <end position="158"/>
    </location>
</feature>
<sequence>MHEGVQVSSKLEQLQDLLAPVVVALGYQCWGIDFSSQGKHSVLRIYIDKEGGVLVDDCAIVSRQISGVLDVEDPISTEYTLEVSSPGMERPLFTIEQFASYAGEQVKIKLRSPFEGRRNFQGLLRGVEEQDVVVQVEDHEFLLPIDMIDKANIIPTFD</sequence>
<comment type="function">
    <text evidence="1">Required for maturation of 30S ribosomal subunits.</text>
</comment>
<comment type="subcellular location">
    <subcellularLocation>
        <location evidence="1">Cytoplasm</location>
    </subcellularLocation>
</comment>
<comment type="similarity">
    <text evidence="1">Belongs to the RimP family.</text>
</comment>
<name>RIMP_PSEU2</name>
<proteinExistence type="inferred from homology"/>
<protein>
    <recommendedName>
        <fullName evidence="1">Ribosome maturation factor RimP</fullName>
    </recommendedName>
</protein>
<keyword id="KW-0963">Cytoplasm</keyword>
<keyword id="KW-0690">Ribosome biogenesis</keyword>
<reference key="1">
    <citation type="journal article" date="1997" name="J. Bacteriol.">
        <title>Multiple loci of Pseudomonas syringae pv. syringae are involved in pathogenicity on bean: restoration of one lesion-deficient mutant requires two tRNA genes.</title>
        <authorList>
            <person name="Rich J.J."/>
            <person name="Willis D.K."/>
        </authorList>
    </citation>
    <scope>NUCLEOTIDE SEQUENCE [GENOMIC DNA]</scope>
</reference>
<reference key="2">
    <citation type="journal article" date="2005" name="Proc. Natl. Acad. Sci. U.S.A.">
        <title>Comparison of the complete genome sequences of Pseudomonas syringae pv. syringae B728a and pv. tomato DC3000.</title>
        <authorList>
            <person name="Feil H."/>
            <person name="Feil W.S."/>
            <person name="Chain P."/>
            <person name="Larimer F."/>
            <person name="Dibartolo G."/>
            <person name="Copeland A."/>
            <person name="Lykidis A."/>
            <person name="Trong S."/>
            <person name="Nolan M."/>
            <person name="Goltsman E."/>
            <person name="Thiel J."/>
            <person name="Malfatti S."/>
            <person name="Loper J.E."/>
            <person name="Lapidus A."/>
            <person name="Detter J.C."/>
            <person name="Land M."/>
            <person name="Richardson P.M."/>
            <person name="Kyrpides N.C."/>
            <person name="Ivanova N."/>
            <person name="Lindow S.E."/>
        </authorList>
    </citation>
    <scope>NUCLEOTIDE SEQUENCE [LARGE SCALE GENOMIC DNA]</scope>
    <source>
        <strain>B728a</strain>
    </source>
</reference>
<organism>
    <name type="scientific">Pseudomonas syringae pv. syringae (strain B728a)</name>
    <dbReference type="NCBI Taxonomy" id="205918"/>
    <lineage>
        <taxon>Bacteria</taxon>
        <taxon>Pseudomonadati</taxon>
        <taxon>Pseudomonadota</taxon>
        <taxon>Gammaproteobacteria</taxon>
        <taxon>Pseudomonadales</taxon>
        <taxon>Pseudomonadaceae</taxon>
        <taxon>Pseudomonas</taxon>
        <taxon>Pseudomonas syringae</taxon>
    </lineage>
</organism>
<evidence type="ECO:0000255" key="1">
    <source>
        <dbReference type="HAMAP-Rule" id="MF_01077"/>
    </source>
</evidence>